<accession>B1MVZ2</accession>
<protein>
    <recommendedName>
        <fullName evidence="1">Small ribosomal subunit protein uS13</fullName>
    </recommendedName>
    <alternativeName>
        <fullName evidence="3">30S ribosomal protein S13</fullName>
    </alternativeName>
</protein>
<reference key="1">
    <citation type="journal article" date="2008" name="J. Bacteriol.">
        <title>Complete genome sequence of Leuconostoc citreum KM20.</title>
        <authorList>
            <person name="Kim J.F."/>
            <person name="Jeong H."/>
            <person name="Lee J.-S."/>
            <person name="Choi S.-H."/>
            <person name="Ha M."/>
            <person name="Hur C.-G."/>
            <person name="Kim J.-S."/>
            <person name="Lee S."/>
            <person name="Park H.-S."/>
            <person name="Park Y.-H."/>
            <person name="Oh T.K."/>
        </authorList>
    </citation>
    <scope>NUCLEOTIDE SEQUENCE [LARGE SCALE GENOMIC DNA]</scope>
    <source>
        <strain>KM20</strain>
    </source>
</reference>
<evidence type="ECO:0000255" key="1">
    <source>
        <dbReference type="HAMAP-Rule" id="MF_01315"/>
    </source>
</evidence>
<evidence type="ECO:0000256" key="2">
    <source>
        <dbReference type="SAM" id="MobiDB-lite"/>
    </source>
</evidence>
<evidence type="ECO:0000305" key="3"/>
<proteinExistence type="inferred from homology"/>
<name>RS13_LEUCK</name>
<keyword id="KW-1185">Reference proteome</keyword>
<keyword id="KW-0687">Ribonucleoprotein</keyword>
<keyword id="KW-0689">Ribosomal protein</keyword>
<keyword id="KW-0694">RNA-binding</keyword>
<keyword id="KW-0699">rRNA-binding</keyword>
<keyword id="KW-0820">tRNA-binding</keyword>
<sequence length="123" mass="13575">MARIAGIDLPRDKRIVIGLTYIYGIGNTTAQKILAEAGVSEDVRVRDLSADQEDAIRATVDKLNLQLEGDLRRKVSLDIKSLQEIASYRGIRHRKGLPVRGQNTKNNARTRKGPAKAIAGKKK</sequence>
<feature type="chain" id="PRO_1000141282" description="Small ribosomal subunit protein uS13">
    <location>
        <begin position="1"/>
        <end position="123"/>
    </location>
</feature>
<feature type="region of interest" description="Disordered" evidence="2">
    <location>
        <begin position="93"/>
        <end position="123"/>
    </location>
</feature>
<feature type="compositionally biased region" description="Basic residues" evidence="2">
    <location>
        <begin position="108"/>
        <end position="123"/>
    </location>
</feature>
<organism>
    <name type="scientific">Leuconostoc citreum (strain KM20)</name>
    <dbReference type="NCBI Taxonomy" id="349519"/>
    <lineage>
        <taxon>Bacteria</taxon>
        <taxon>Bacillati</taxon>
        <taxon>Bacillota</taxon>
        <taxon>Bacilli</taxon>
        <taxon>Lactobacillales</taxon>
        <taxon>Lactobacillaceae</taxon>
        <taxon>Leuconostoc</taxon>
    </lineage>
</organism>
<dbReference type="EMBL" id="DQ489736">
    <property type="protein sequence ID" value="ACA83396.1"/>
    <property type="molecule type" value="Genomic_DNA"/>
</dbReference>
<dbReference type="RefSeq" id="WP_004899407.1">
    <property type="nucleotide sequence ID" value="NC_010471.1"/>
</dbReference>
<dbReference type="SMR" id="B1MVZ2"/>
<dbReference type="STRING" id="349519.LCK_01573"/>
<dbReference type="GeneID" id="61103264"/>
<dbReference type="KEGG" id="lci:LCK_01573"/>
<dbReference type="eggNOG" id="COG0099">
    <property type="taxonomic scope" value="Bacteria"/>
</dbReference>
<dbReference type="HOGENOM" id="CLU_103849_1_1_9"/>
<dbReference type="OrthoDB" id="9803610at2"/>
<dbReference type="Proteomes" id="UP000002166">
    <property type="component" value="Chromosome"/>
</dbReference>
<dbReference type="GO" id="GO:0005829">
    <property type="term" value="C:cytosol"/>
    <property type="evidence" value="ECO:0007669"/>
    <property type="project" value="TreeGrafter"/>
</dbReference>
<dbReference type="GO" id="GO:0015935">
    <property type="term" value="C:small ribosomal subunit"/>
    <property type="evidence" value="ECO:0007669"/>
    <property type="project" value="TreeGrafter"/>
</dbReference>
<dbReference type="GO" id="GO:0019843">
    <property type="term" value="F:rRNA binding"/>
    <property type="evidence" value="ECO:0007669"/>
    <property type="project" value="UniProtKB-UniRule"/>
</dbReference>
<dbReference type="GO" id="GO:0003735">
    <property type="term" value="F:structural constituent of ribosome"/>
    <property type="evidence" value="ECO:0007669"/>
    <property type="project" value="InterPro"/>
</dbReference>
<dbReference type="GO" id="GO:0000049">
    <property type="term" value="F:tRNA binding"/>
    <property type="evidence" value="ECO:0007669"/>
    <property type="project" value="UniProtKB-UniRule"/>
</dbReference>
<dbReference type="GO" id="GO:0006412">
    <property type="term" value="P:translation"/>
    <property type="evidence" value="ECO:0007669"/>
    <property type="project" value="UniProtKB-UniRule"/>
</dbReference>
<dbReference type="FunFam" id="1.10.8.50:FF:000001">
    <property type="entry name" value="30S ribosomal protein S13"/>
    <property type="match status" value="1"/>
</dbReference>
<dbReference type="FunFam" id="4.10.910.10:FF:000001">
    <property type="entry name" value="30S ribosomal protein S13"/>
    <property type="match status" value="1"/>
</dbReference>
<dbReference type="Gene3D" id="1.10.8.50">
    <property type="match status" value="1"/>
</dbReference>
<dbReference type="Gene3D" id="4.10.910.10">
    <property type="entry name" value="30s ribosomal protein s13, domain 2"/>
    <property type="match status" value="1"/>
</dbReference>
<dbReference type="HAMAP" id="MF_01315">
    <property type="entry name" value="Ribosomal_uS13"/>
    <property type="match status" value="1"/>
</dbReference>
<dbReference type="InterPro" id="IPR027437">
    <property type="entry name" value="Rbsml_uS13_C"/>
</dbReference>
<dbReference type="InterPro" id="IPR001892">
    <property type="entry name" value="Ribosomal_uS13"/>
</dbReference>
<dbReference type="InterPro" id="IPR010979">
    <property type="entry name" value="Ribosomal_uS13-like_H2TH"/>
</dbReference>
<dbReference type="InterPro" id="IPR019980">
    <property type="entry name" value="Ribosomal_uS13_bac-type"/>
</dbReference>
<dbReference type="InterPro" id="IPR018269">
    <property type="entry name" value="Ribosomal_uS13_CS"/>
</dbReference>
<dbReference type="NCBIfam" id="TIGR03631">
    <property type="entry name" value="uS13_bact"/>
    <property type="match status" value="1"/>
</dbReference>
<dbReference type="PANTHER" id="PTHR10871">
    <property type="entry name" value="30S RIBOSOMAL PROTEIN S13/40S RIBOSOMAL PROTEIN S18"/>
    <property type="match status" value="1"/>
</dbReference>
<dbReference type="PANTHER" id="PTHR10871:SF1">
    <property type="entry name" value="SMALL RIBOSOMAL SUBUNIT PROTEIN US13M"/>
    <property type="match status" value="1"/>
</dbReference>
<dbReference type="Pfam" id="PF00416">
    <property type="entry name" value="Ribosomal_S13"/>
    <property type="match status" value="1"/>
</dbReference>
<dbReference type="PIRSF" id="PIRSF002134">
    <property type="entry name" value="Ribosomal_S13"/>
    <property type="match status" value="1"/>
</dbReference>
<dbReference type="SUPFAM" id="SSF46946">
    <property type="entry name" value="S13-like H2TH domain"/>
    <property type="match status" value="1"/>
</dbReference>
<dbReference type="PROSITE" id="PS00646">
    <property type="entry name" value="RIBOSOMAL_S13_1"/>
    <property type="match status" value="1"/>
</dbReference>
<dbReference type="PROSITE" id="PS50159">
    <property type="entry name" value="RIBOSOMAL_S13_2"/>
    <property type="match status" value="1"/>
</dbReference>
<gene>
    <name evidence="1" type="primary">rpsM</name>
    <name type="ordered locus">LCK_01573</name>
</gene>
<comment type="function">
    <text evidence="1">Located at the top of the head of the 30S subunit, it contacts several helices of the 16S rRNA. In the 70S ribosome it contacts the 23S rRNA (bridge B1a) and protein L5 of the 50S subunit (bridge B1b), connecting the 2 subunits; these bridges are implicated in subunit movement. Contacts the tRNAs in the A and P-sites.</text>
</comment>
<comment type="subunit">
    <text evidence="1">Part of the 30S ribosomal subunit. Forms a loose heterodimer with protein S19. Forms two bridges to the 50S subunit in the 70S ribosome.</text>
</comment>
<comment type="similarity">
    <text evidence="1">Belongs to the universal ribosomal protein uS13 family.</text>
</comment>